<dbReference type="EC" id="2.1.1.228"/>
<dbReference type="EMBL" id="AL646052">
    <property type="protein sequence ID" value="CAD14637.1"/>
    <property type="molecule type" value="Genomic_DNA"/>
</dbReference>
<dbReference type="RefSeq" id="WP_011000887.1">
    <property type="nucleotide sequence ID" value="NC_003295.1"/>
</dbReference>
<dbReference type="SMR" id="Q8Y0V8"/>
<dbReference type="STRING" id="267608.RSc0935"/>
<dbReference type="EnsemblBacteria" id="CAD14637">
    <property type="protein sequence ID" value="CAD14637"/>
    <property type="gene ID" value="RSc0935"/>
</dbReference>
<dbReference type="KEGG" id="rso:RSc0935"/>
<dbReference type="eggNOG" id="COG0336">
    <property type="taxonomic scope" value="Bacteria"/>
</dbReference>
<dbReference type="HOGENOM" id="CLU_047363_0_2_4"/>
<dbReference type="Proteomes" id="UP000001436">
    <property type="component" value="Chromosome"/>
</dbReference>
<dbReference type="GO" id="GO:0005829">
    <property type="term" value="C:cytosol"/>
    <property type="evidence" value="ECO:0007669"/>
    <property type="project" value="TreeGrafter"/>
</dbReference>
<dbReference type="GO" id="GO:0052906">
    <property type="term" value="F:tRNA (guanine(37)-N1)-methyltransferase activity"/>
    <property type="evidence" value="ECO:0007669"/>
    <property type="project" value="UniProtKB-UniRule"/>
</dbReference>
<dbReference type="GO" id="GO:0002939">
    <property type="term" value="P:tRNA N1-guanine methylation"/>
    <property type="evidence" value="ECO:0007669"/>
    <property type="project" value="TreeGrafter"/>
</dbReference>
<dbReference type="CDD" id="cd18080">
    <property type="entry name" value="TrmD-like"/>
    <property type="match status" value="1"/>
</dbReference>
<dbReference type="FunFam" id="1.10.1270.20:FF:000001">
    <property type="entry name" value="tRNA (guanine-N(1)-)-methyltransferase"/>
    <property type="match status" value="1"/>
</dbReference>
<dbReference type="FunFam" id="3.40.1280.10:FF:000001">
    <property type="entry name" value="tRNA (guanine-N(1)-)-methyltransferase"/>
    <property type="match status" value="1"/>
</dbReference>
<dbReference type="Gene3D" id="3.40.1280.10">
    <property type="match status" value="1"/>
</dbReference>
<dbReference type="Gene3D" id="1.10.1270.20">
    <property type="entry name" value="tRNA(m1g37)methyltransferase, domain 2"/>
    <property type="match status" value="1"/>
</dbReference>
<dbReference type="HAMAP" id="MF_00605">
    <property type="entry name" value="TrmD"/>
    <property type="match status" value="1"/>
</dbReference>
<dbReference type="InterPro" id="IPR029028">
    <property type="entry name" value="Alpha/beta_knot_MTases"/>
</dbReference>
<dbReference type="InterPro" id="IPR023148">
    <property type="entry name" value="tRNA_m1G_MeTrfase_C_sf"/>
</dbReference>
<dbReference type="InterPro" id="IPR002649">
    <property type="entry name" value="tRNA_m1G_MeTrfase_TrmD"/>
</dbReference>
<dbReference type="InterPro" id="IPR029026">
    <property type="entry name" value="tRNA_m1G_MTases_N"/>
</dbReference>
<dbReference type="InterPro" id="IPR016009">
    <property type="entry name" value="tRNA_MeTrfase_TRMD/TRM10"/>
</dbReference>
<dbReference type="NCBIfam" id="NF000648">
    <property type="entry name" value="PRK00026.1"/>
    <property type="match status" value="1"/>
</dbReference>
<dbReference type="NCBIfam" id="TIGR00088">
    <property type="entry name" value="trmD"/>
    <property type="match status" value="1"/>
</dbReference>
<dbReference type="PANTHER" id="PTHR46417">
    <property type="entry name" value="TRNA (GUANINE-N(1)-)-METHYLTRANSFERASE"/>
    <property type="match status" value="1"/>
</dbReference>
<dbReference type="PANTHER" id="PTHR46417:SF1">
    <property type="entry name" value="TRNA (GUANINE-N(1)-)-METHYLTRANSFERASE"/>
    <property type="match status" value="1"/>
</dbReference>
<dbReference type="Pfam" id="PF01746">
    <property type="entry name" value="tRNA_m1G_MT"/>
    <property type="match status" value="1"/>
</dbReference>
<dbReference type="PIRSF" id="PIRSF000386">
    <property type="entry name" value="tRNA_mtase"/>
    <property type="match status" value="1"/>
</dbReference>
<dbReference type="SUPFAM" id="SSF75217">
    <property type="entry name" value="alpha/beta knot"/>
    <property type="match status" value="1"/>
</dbReference>
<comment type="function">
    <text evidence="1">Specifically methylates guanosine-37 in various tRNAs.</text>
</comment>
<comment type="catalytic activity">
    <reaction>
        <text>guanosine(37) in tRNA + S-adenosyl-L-methionine = N(1)-methylguanosine(37) in tRNA + S-adenosyl-L-homocysteine + H(+)</text>
        <dbReference type="Rhea" id="RHEA:36899"/>
        <dbReference type="Rhea" id="RHEA-COMP:10145"/>
        <dbReference type="Rhea" id="RHEA-COMP:10147"/>
        <dbReference type="ChEBI" id="CHEBI:15378"/>
        <dbReference type="ChEBI" id="CHEBI:57856"/>
        <dbReference type="ChEBI" id="CHEBI:59789"/>
        <dbReference type="ChEBI" id="CHEBI:73542"/>
        <dbReference type="ChEBI" id="CHEBI:74269"/>
        <dbReference type="EC" id="2.1.1.228"/>
    </reaction>
</comment>
<comment type="subunit">
    <text evidence="1">Homodimer.</text>
</comment>
<comment type="subcellular location">
    <subcellularLocation>
        <location evidence="2">Cytoplasm</location>
    </subcellularLocation>
</comment>
<comment type="similarity">
    <text evidence="2">Belongs to the RNA methyltransferase TrmD family.</text>
</comment>
<gene>
    <name type="primary">trmD</name>
    <name type="ordered locus">RSc0935</name>
    <name type="ORF">RS04479</name>
</gene>
<protein>
    <recommendedName>
        <fullName>tRNA (guanine-N(1)-)-methyltransferase</fullName>
        <ecNumber>2.1.1.228</ecNumber>
    </recommendedName>
    <alternativeName>
        <fullName>M1G-methyltransferase</fullName>
    </alternativeName>
    <alternativeName>
        <fullName>tRNA [GM37] methyltransferase</fullName>
    </alternativeName>
</protein>
<reference key="1">
    <citation type="journal article" date="2002" name="Nature">
        <title>Genome sequence of the plant pathogen Ralstonia solanacearum.</title>
        <authorList>
            <person name="Salanoubat M."/>
            <person name="Genin S."/>
            <person name="Artiguenave F."/>
            <person name="Gouzy J."/>
            <person name="Mangenot S."/>
            <person name="Arlat M."/>
            <person name="Billault A."/>
            <person name="Brottier P."/>
            <person name="Camus J.-C."/>
            <person name="Cattolico L."/>
            <person name="Chandler M."/>
            <person name="Choisne N."/>
            <person name="Claudel-Renard C."/>
            <person name="Cunnac S."/>
            <person name="Demange N."/>
            <person name="Gaspin C."/>
            <person name="Lavie M."/>
            <person name="Moisan A."/>
            <person name="Robert C."/>
            <person name="Saurin W."/>
            <person name="Schiex T."/>
            <person name="Siguier P."/>
            <person name="Thebault P."/>
            <person name="Whalen M."/>
            <person name="Wincker P."/>
            <person name="Levy M."/>
            <person name="Weissenbach J."/>
            <person name="Boucher C.A."/>
        </authorList>
    </citation>
    <scope>NUCLEOTIDE SEQUENCE [LARGE SCALE GENOMIC DNA]</scope>
    <source>
        <strain>ATCC BAA-1114 / GMI1000</strain>
    </source>
</reference>
<evidence type="ECO:0000250" key="1"/>
<evidence type="ECO:0000305" key="2"/>
<sequence length="262" mass="28871">MQFDVISLFPEMFRALTDWGITSRAAKQQVYTLRTWNPRDFTTDNYRTVDDRPYGGGPGMVMLAKPLEAALDAIREAQAPAPSHVVLLSPQGRPLTHRRVMELAQLPALTLLCGRYEAIDQRLVDRRVDEEISLGDFVLSGGEIAAMAIIDAVVRQLPGVLGDAQSAVQDSFVNGLLDCPHYTRPEEYEGVRVPDVLLGGHHAEIEKWRRQQALLNTMRKRPDLIEAARRQGLLSRSDEVFLAAAATTAKGSGASLSEAPAK</sequence>
<accession>Q8Y0V8</accession>
<feature type="chain" id="PRO_0000060438" description="tRNA (guanine-N(1)-)-methyltransferase">
    <location>
        <begin position="1"/>
        <end position="262"/>
    </location>
</feature>
<feature type="binding site" evidence="1">
    <location>
        <position position="114"/>
    </location>
    <ligand>
        <name>S-adenosyl-L-methionine</name>
        <dbReference type="ChEBI" id="CHEBI:59789"/>
    </ligand>
</feature>
<feature type="binding site" evidence="1">
    <location>
        <begin position="134"/>
        <end position="139"/>
    </location>
    <ligand>
        <name>S-adenosyl-L-methionine</name>
        <dbReference type="ChEBI" id="CHEBI:59789"/>
    </ligand>
</feature>
<keyword id="KW-0963">Cytoplasm</keyword>
<keyword id="KW-0489">Methyltransferase</keyword>
<keyword id="KW-1185">Reference proteome</keyword>
<keyword id="KW-0949">S-adenosyl-L-methionine</keyword>
<keyword id="KW-0808">Transferase</keyword>
<keyword id="KW-0819">tRNA processing</keyword>
<organism>
    <name type="scientific">Ralstonia nicotianae (strain ATCC BAA-1114 / GMI1000)</name>
    <name type="common">Ralstonia solanacearum</name>
    <dbReference type="NCBI Taxonomy" id="267608"/>
    <lineage>
        <taxon>Bacteria</taxon>
        <taxon>Pseudomonadati</taxon>
        <taxon>Pseudomonadota</taxon>
        <taxon>Betaproteobacteria</taxon>
        <taxon>Burkholderiales</taxon>
        <taxon>Burkholderiaceae</taxon>
        <taxon>Ralstonia</taxon>
        <taxon>Ralstonia solanacearum species complex</taxon>
    </lineage>
</organism>
<name>TRMD_RALN1</name>
<proteinExistence type="inferred from homology"/>